<evidence type="ECO:0000255" key="1"/>
<evidence type="ECO:0000256" key="2">
    <source>
        <dbReference type="SAM" id="MobiDB-lite"/>
    </source>
</evidence>
<evidence type="ECO:0000305" key="3"/>
<organism>
    <name type="scientific">Schizosaccharomyces pombe (strain 972 / ATCC 24843)</name>
    <name type="common">Fission yeast</name>
    <dbReference type="NCBI Taxonomy" id="284812"/>
    <lineage>
        <taxon>Eukaryota</taxon>
        <taxon>Fungi</taxon>
        <taxon>Dikarya</taxon>
        <taxon>Ascomycota</taxon>
        <taxon>Taphrinomycotina</taxon>
        <taxon>Schizosaccharomycetes</taxon>
        <taxon>Schizosaccharomycetales</taxon>
        <taxon>Schizosaccharomycetaceae</taxon>
        <taxon>Schizosaccharomyces</taxon>
    </lineage>
</organism>
<proteinExistence type="predicted"/>
<accession>P87124</accession>
<reference key="1">
    <citation type="journal article" date="2002" name="Nature">
        <title>The genome sequence of Schizosaccharomyces pombe.</title>
        <authorList>
            <person name="Wood V."/>
            <person name="Gwilliam R."/>
            <person name="Rajandream M.A."/>
            <person name="Lyne M.H."/>
            <person name="Lyne R."/>
            <person name="Stewart A."/>
            <person name="Sgouros J.G."/>
            <person name="Peat N."/>
            <person name="Hayles J."/>
            <person name="Baker S.G."/>
            <person name="Basham D."/>
            <person name="Bowman S."/>
            <person name="Brooks K."/>
            <person name="Brown D."/>
            <person name="Brown S."/>
            <person name="Chillingworth T."/>
            <person name="Churcher C.M."/>
            <person name="Collins M."/>
            <person name="Connor R."/>
            <person name="Cronin A."/>
            <person name="Davis P."/>
            <person name="Feltwell T."/>
            <person name="Fraser A."/>
            <person name="Gentles S."/>
            <person name="Goble A."/>
            <person name="Hamlin N."/>
            <person name="Harris D.E."/>
            <person name="Hidalgo J."/>
            <person name="Hodgson G."/>
            <person name="Holroyd S."/>
            <person name="Hornsby T."/>
            <person name="Howarth S."/>
            <person name="Huckle E.J."/>
            <person name="Hunt S."/>
            <person name="Jagels K."/>
            <person name="James K.D."/>
            <person name="Jones L."/>
            <person name="Jones M."/>
            <person name="Leather S."/>
            <person name="McDonald S."/>
            <person name="McLean J."/>
            <person name="Mooney P."/>
            <person name="Moule S."/>
            <person name="Mungall K.L."/>
            <person name="Murphy L.D."/>
            <person name="Niblett D."/>
            <person name="Odell C."/>
            <person name="Oliver K."/>
            <person name="O'Neil S."/>
            <person name="Pearson D."/>
            <person name="Quail M.A."/>
            <person name="Rabbinowitsch E."/>
            <person name="Rutherford K.M."/>
            <person name="Rutter S."/>
            <person name="Saunders D."/>
            <person name="Seeger K."/>
            <person name="Sharp S."/>
            <person name="Skelton J."/>
            <person name="Simmonds M.N."/>
            <person name="Squares R."/>
            <person name="Squares S."/>
            <person name="Stevens K."/>
            <person name="Taylor K."/>
            <person name="Taylor R.G."/>
            <person name="Tivey A."/>
            <person name="Walsh S.V."/>
            <person name="Warren T."/>
            <person name="Whitehead S."/>
            <person name="Woodward J.R."/>
            <person name="Volckaert G."/>
            <person name="Aert R."/>
            <person name="Robben J."/>
            <person name="Grymonprez B."/>
            <person name="Weltjens I."/>
            <person name="Vanstreels E."/>
            <person name="Rieger M."/>
            <person name="Schaefer M."/>
            <person name="Mueller-Auer S."/>
            <person name="Gabel C."/>
            <person name="Fuchs M."/>
            <person name="Duesterhoeft A."/>
            <person name="Fritzc C."/>
            <person name="Holzer E."/>
            <person name="Moestl D."/>
            <person name="Hilbert H."/>
            <person name="Borzym K."/>
            <person name="Langer I."/>
            <person name="Beck A."/>
            <person name="Lehrach H."/>
            <person name="Reinhardt R."/>
            <person name="Pohl T.M."/>
            <person name="Eger P."/>
            <person name="Zimmermann W."/>
            <person name="Wedler H."/>
            <person name="Wambutt R."/>
            <person name="Purnelle B."/>
            <person name="Goffeau A."/>
            <person name="Cadieu E."/>
            <person name="Dreano S."/>
            <person name="Gloux S."/>
            <person name="Lelaure V."/>
            <person name="Mottier S."/>
            <person name="Galibert F."/>
            <person name="Aves S.J."/>
            <person name="Xiang Z."/>
            <person name="Hunt C."/>
            <person name="Moore K."/>
            <person name="Hurst S.M."/>
            <person name="Lucas M."/>
            <person name="Rochet M."/>
            <person name="Gaillardin C."/>
            <person name="Tallada V.A."/>
            <person name="Garzon A."/>
            <person name="Thode G."/>
            <person name="Daga R.R."/>
            <person name="Cruzado L."/>
            <person name="Jimenez J."/>
            <person name="Sanchez M."/>
            <person name="del Rey F."/>
            <person name="Benito J."/>
            <person name="Dominguez A."/>
            <person name="Revuelta J.L."/>
            <person name="Moreno S."/>
            <person name="Armstrong J."/>
            <person name="Forsburg S.L."/>
            <person name="Cerutti L."/>
            <person name="Lowe T."/>
            <person name="McCombie W.R."/>
            <person name="Paulsen I."/>
            <person name="Potashkin J."/>
            <person name="Shpakovski G.V."/>
            <person name="Ussery D."/>
            <person name="Barrell B.G."/>
            <person name="Nurse P."/>
        </authorList>
    </citation>
    <scope>NUCLEOTIDE SEQUENCE [LARGE SCALE GENOMIC DNA]</scope>
    <source>
        <strain>972 / ATCC 24843</strain>
    </source>
</reference>
<dbReference type="EMBL" id="CU329670">
    <property type="protein sequence ID" value="CAB08753.1"/>
    <property type="molecule type" value="Genomic_DNA"/>
</dbReference>
<dbReference type="PIR" id="T38676">
    <property type="entry name" value="T38676"/>
</dbReference>
<dbReference type="RefSeq" id="NP_593334.1">
    <property type="nucleotide sequence ID" value="NM_001018766.2"/>
</dbReference>
<dbReference type="SMR" id="P87124"/>
<dbReference type="FunCoup" id="P87124">
    <property type="interactions" value="23"/>
</dbReference>
<dbReference type="iPTMnet" id="P87124"/>
<dbReference type="PaxDb" id="4896-SPAC3A12.08.1"/>
<dbReference type="EnsemblFungi" id="SPAC3A12.08.1">
    <property type="protein sequence ID" value="SPAC3A12.08.1:pep"/>
    <property type="gene ID" value="SPAC3A12.08"/>
</dbReference>
<dbReference type="KEGG" id="spo:2543186"/>
<dbReference type="PomBase" id="SPAC3A12.08"/>
<dbReference type="VEuPathDB" id="FungiDB:SPAC3A12.08"/>
<dbReference type="eggNOG" id="KOG4781">
    <property type="taxonomic scope" value="Eukaryota"/>
</dbReference>
<dbReference type="HOGENOM" id="CLU_1289609_0_0_1"/>
<dbReference type="InParanoid" id="P87124"/>
<dbReference type="OMA" id="HEWISIG"/>
<dbReference type="PRO" id="PR:P87124"/>
<dbReference type="Proteomes" id="UP000002485">
    <property type="component" value="Chromosome I"/>
</dbReference>
<dbReference type="GO" id="GO:0016020">
    <property type="term" value="C:membrane"/>
    <property type="evidence" value="ECO:0007669"/>
    <property type="project" value="UniProtKB-SubCell"/>
</dbReference>
<dbReference type="GO" id="GO:0005739">
    <property type="term" value="C:mitochondrion"/>
    <property type="evidence" value="ECO:0007005"/>
    <property type="project" value="PomBase"/>
</dbReference>
<dbReference type="GO" id="GO:0047617">
    <property type="term" value="F:fatty acyl-CoA hydrolase activity"/>
    <property type="evidence" value="ECO:0000266"/>
    <property type="project" value="PomBase"/>
</dbReference>
<dbReference type="GO" id="GO:0006637">
    <property type="term" value="P:acyl-CoA metabolic process"/>
    <property type="evidence" value="ECO:0000250"/>
    <property type="project" value="PomBase"/>
</dbReference>
<dbReference type="Gene3D" id="3.10.129.10">
    <property type="entry name" value="Hotdog Thioesterase"/>
    <property type="match status" value="1"/>
</dbReference>
<dbReference type="InterPro" id="IPR029069">
    <property type="entry name" value="HotDog_dom_sf"/>
</dbReference>
<dbReference type="InterPro" id="IPR052061">
    <property type="entry name" value="PTE-AB_protein"/>
</dbReference>
<dbReference type="PANTHER" id="PTHR47260">
    <property type="entry name" value="UPF0644 PROTEIN PB2B4.06"/>
    <property type="match status" value="1"/>
</dbReference>
<dbReference type="PANTHER" id="PTHR47260:SF1">
    <property type="entry name" value="UPF0644 PROTEIN PB2B4.06"/>
    <property type="match status" value="1"/>
</dbReference>
<dbReference type="SUPFAM" id="SSF54637">
    <property type="entry name" value="Thioesterase/thiol ester dehydrase-isomerase"/>
    <property type="match status" value="1"/>
</dbReference>
<gene>
    <name type="ORF">SPAC3A12.08</name>
</gene>
<feature type="chain" id="PRO_0000116637" description="Uncharacterized protein C3A12.08">
    <location>
        <begin position="1"/>
        <end position="214"/>
    </location>
</feature>
<feature type="transmembrane region" description="Helical" evidence="1">
    <location>
        <begin position="10"/>
        <end position="30"/>
    </location>
</feature>
<feature type="region of interest" description="Disordered" evidence="2">
    <location>
        <begin position="147"/>
        <end position="166"/>
    </location>
</feature>
<feature type="compositionally biased region" description="Polar residues" evidence="2">
    <location>
        <begin position="147"/>
        <end position="157"/>
    </location>
</feature>
<sequence>MSSKLFQNKLLLAGIGGFMVGGLASWVVSSDAYTAYHRLPASAKHISEISKSPEAVQMIDNIYRERQRSMKMEEHPSLLQSKYPSNFLSFKDGLIPVFKTFYDPEHEEWISIGLMGKALTGYQKLAHGGAIATLLIESLETVRNLRSSQANSQSTQPRDPIPTENFDVRTPSYSINYKKPVPAGDWVIVRVKDDVARLYNSKSQLLAEALDLQS</sequence>
<protein>
    <recommendedName>
        <fullName>Uncharacterized protein C3A12.08</fullName>
    </recommendedName>
</protein>
<name>YDL8_SCHPO</name>
<comment type="subcellular location">
    <subcellularLocation>
        <location evidence="3">Membrane</location>
        <topology evidence="3">Single-pass membrane protein</topology>
    </subcellularLocation>
</comment>
<keyword id="KW-0472">Membrane</keyword>
<keyword id="KW-1185">Reference proteome</keyword>
<keyword id="KW-0812">Transmembrane</keyword>
<keyword id="KW-1133">Transmembrane helix</keyword>